<sequence length="145" mass="15859">MLSAEEKAAVTSLFAKVKVDEVGGEALGRLLVVYPWTQRFFESFGDLSSADAILGNPKVKAHGKKVLDSFCEGLKQLDDLKGAFASLSELHCDKLHVDPENFRLLGNVLVVVLARRFGSEFSPELQASFQKVVTGVANALAHRYH</sequence>
<dbReference type="EMBL" id="X00354">
    <property type="protein sequence ID" value="CAA25101.1"/>
    <property type="molecule type" value="Genomic_DNA"/>
</dbReference>
<dbReference type="EMBL" id="M63452">
    <property type="protein sequence ID" value="AAA30519.1"/>
    <property type="molecule type" value="Genomic_DNA"/>
</dbReference>
<dbReference type="EMBL" id="BC104565">
    <property type="protein sequence ID" value="AAI04566.2"/>
    <property type="molecule type" value="mRNA"/>
</dbReference>
<dbReference type="PIR" id="A93504">
    <property type="entry name" value="HBBOF"/>
</dbReference>
<dbReference type="RefSeq" id="NP_001014902.1">
    <property type="nucleotide sequence ID" value="NM_001014902.4"/>
</dbReference>
<dbReference type="RefSeq" id="NP_001103979.1">
    <property type="nucleotide sequence ID" value="NM_001110509.2"/>
</dbReference>
<dbReference type="SMR" id="P02081"/>
<dbReference type="FunCoup" id="P02081">
    <property type="interactions" value="45"/>
</dbReference>
<dbReference type="STRING" id="9913.ENSBTAP00000043063"/>
<dbReference type="PaxDb" id="9913-ENSBTAP00000050256"/>
<dbReference type="PeptideAtlas" id="P02081"/>
<dbReference type="GeneID" id="511735"/>
<dbReference type="KEGG" id="bta:511735"/>
<dbReference type="CTD" id="511735"/>
<dbReference type="VEuPathDB" id="HostDB:ENSBTAG00000038748"/>
<dbReference type="eggNOG" id="KOG3378">
    <property type="taxonomic scope" value="Eukaryota"/>
</dbReference>
<dbReference type="HOGENOM" id="CLU_003827_10_0_1"/>
<dbReference type="InParanoid" id="P02081"/>
<dbReference type="OMA" id="SADAICH"/>
<dbReference type="OrthoDB" id="9886081at2759"/>
<dbReference type="TreeFam" id="TF333268"/>
<dbReference type="Proteomes" id="UP000009136">
    <property type="component" value="Chromosome 15"/>
</dbReference>
<dbReference type="Bgee" id="ENSBTAG00000038748">
    <property type="expression patterns" value="Expressed in floor plate of diencephalon and 60 other cell types or tissues"/>
</dbReference>
<dbReference type="GO" id="GO:0031838">
    <property type="term" value="C:haptoglobin-hemoglobin complex"/>
    <property type="evidence" value="ECO:0000318"/>
    <property type="project" value="GO_Central"/>
</dbReference>
<dbReference type="GO" id="GO:0005833">
    <property type="term" value="C:hemoglobin complex"/>
    <property type="evidence" value="ECO:0000318"/>
    <property type="project" value="GO_Central"/>
</dbReference>
<dbReference type="GO" id="GO:0020037">
    <property type="term" value="F:heme binding"/>
    <property type="evidence" value="ECO:0000318"/>
    <property type="project" value="GO_Central"/>
</dbReference>
<dbReference type="GO" id="GO:0031721">
    <property type="term" value="F:hemoglobin alpha binding"/>
    <property type="evidence" value="ECO:0000318"/>
    <property type="project" value="GO_Central"/>
</dbReference>
<dbReference type="GO" id="GO:0046872">
    <property type="term" value="F:metal ion binding"/>
    <property type="evidence" value="ECO:0007669"/>
    <property type="project" value="UniProtKB-KW"/>
</dbReference>
<dbReference type="GO" id="GO:0019825">
    <property type="term" value="F:oxygen binding"/>
    <property type="evidence" value="ECO:0000318"/>
    <property type="project" value="GO_Central"/>
</dbReference>
<dbReference type="GO" id="GO:0005344">
    <property type="term" value="F:oxygen carrier activity"/>
    <property type="evidence" value="ECO:0000318"/>
    <property type="project" value="GO_Central"/>
</dbReference>
<dbReference type="GO" id="GO:0098869">
    <property type="term" value="P:cellular oxidant detoxification"/>
    <property type="evidence" value="ECO:0007669"/>
    <property type="project" value="GOC"/>
</dbReference>
<dbReference type="GO" id="GO:0042744">
    <property type="term" value="P:hydrogen peroxide catabolic process"/>
    <property type="evidence" value="ECO:0000318"/>
    <property type="project" value="GO_Central"/>
</dbReference>
<dbReference type="CDD" id="cd08925">
    <property type="entry name" value="Hb-beta-like"/>
    <property type="match status" value="1"/>
</dbReference>
<dbReference type="FunFam" id="1.10.490.10:FF:000001">
    <property type="entry name" value="Hemoglobin subunit beta"/>
    <property type="match status" value="1"/>
</dbReference>
<dbReference type="Gene3D" id="1.10.490.10">
    <property type="entry name" value="Globins"/>
    <property type="match status" value="1"/>
</dbReference>
<dbReference type="InterPro" id="IPR000971">
    <property type="entry name" value="Globin"/>
</dbReference>
<dbReference type="InterPro" id="IPR009050">
    <property type="entry name" value="Globin-like_sf"/>
</dbReference>
<dbReference type="InterPro" id="IPR012292">
    <property type="entry name" value="Globin/Proto"/>
</dbReference>
<dbReference type="InterPro" id="IPR002337">
    <property type="entry name" value="Hemoglobin_b"/>
</dbReference>
<dbReference type="InterPro" id="IPR050056">
    <property type="entry name" value="Hemoglobin_oxygen_transport"/>
</dbReference>
<dbReference type="PANTHER" id="PTHR11442">
    <property type="entry name" value="HEMOGLOBIN FAMILY MEMBER"/>
    <property type="match status" value="1"/>
</dbReference>
<dbReference type="PANTHER" id="PTHR11442:SF42">
    <property type="entry name" value="HEMOGLOBIN SUBUNIT BETA"/>
    <property type="match status" value="1"/>
</dbReference>
<dbReference type="Pfam" id="PF00042">
    <property type="entry name" value="Globin"/>
    <property type="match status" value="1"/>
</dbReference>
<dbReference type="PRINTS" id="PR00814">
    <property type="entry name" value="BETAHAEM"/>
</dbReference>
<dbReference type="SUPFAM" id="SSF46458">
    <property type="entry name" value="Globin-like"/>
    <property type="match status" value="1"/>
</dbReference>
<dbReference type="PROSITE" id="PS01033">
    <property type="entry name" value="GLOBIN"/>
    <property type="match status" value="1"/>
</dbReference>
<organism>
    <name type="scientific">Bos taurus</name>
    <name type="common">Bovine</name>
    <dbReference type="NCBI Taxonomy" id="9913"/>
    <lineage>
        <taxon>Eukaryota</taxon>
        <taxon>Metazoa</taxon>
        <taxon>Chordata</taxon>
        <taxon>Craniata</taxon>
        <taxon>Vertebrata</taxon>
        <taxon>Euteleostomi</taxon>
        <taxon>Mammalia</taxon>
        <taxon>Eutheria</taxon>
        <taxon>Laurasiatheria</taxon>
        <taxon>Artiodactyla</taxon>
        <taxon>Ruminantia</taxon>
        <taxon>Pecora</taxon>
        <taxon>Bovidae</taxon>
        <taxon>Bovinae</taxon>
        <taxon>Bos</taxon>
    </lineage>
</organism>
<evidence type="ECO:0000255" key="1">
    <source>
        <dbReference type="PROSITE-ProRule" id="PRU00238"/>
    </source>
</evidence>
<comment type="function">
    <text>Involved in oxygen transport from the lung to the various peripheral tissues.</text>
</comment>
<comment type="subunit">
    <text>Heterotetramer of two alpha chains and two beta chains.</text>
</comment>
<comment type="tissue specificity">
    <text>Red blood cells.</text>
</comment>
<comment type="similarity">
    <text evidence="1">Belongs to the globin family.</text>
</comment>
<accession>P02081</accession>
<accession>Q3SX09</accession>
<reference key="1">
    <citation type="journal article" date="1966" name="Biochemistry">
        <title>The amino acid sequence of the gamma chain of bovine fetal hemoglobin.</title>
        <authorList>
            <person name="Babin D.R."/>
            <person name="Schroeder W.A."/>
            <person name="Shelton J.R."/>
            <person name="Shelton J.B."/>
            <person name="Robberson B."/>
        </authorList>
    </citation>
    <scope>PROTEIN SEQUENCE</scope>
</reference>
<reference key="2">
    <citation type="journal article" date="1984" name="Nucleic Acids Res.">
        <title>Ruminant globin gene structures suggest an evolutionary role for Alu-type repeats.</title>
        <authorList>
            <person name="Schimenti J.C."/>
            <person name="Duncan C.H."/>
        </authorList>
    </citation>
    <scope>NUCLEOTIDE SEQUENCE [GENOMIC DNA]</scope>
</reference>
<reference key="3">
    <citation type="submission" date="2005-09" db="EMBL/GenBank/DDBJ databases">
        <authorList>
            <consortium name="NIH - Mammalian Gene Collection (MGC) project"/>
        </authorList>
    </citation>
    <scope>NUCLEOTIDE SEQUENCE [LARGE SCALE MRNA]</scope>
    <source>
        <strain>Hereford</strain>
        <tissue>Fetal liver</tissue>
    </source>
</reference>
<proteinExistence type="evidence at protein level"/>
<protein>
    <recommendedName>
        <fullName>Hemoglobin fetal subunit beta</fullName>
    </recommendedName>
    <alternativeName>
        <fullName>Beta-globin, fetal</fullName>
    </alternativeName>
    <alternativeName>
        <fullName>Hemoglobin beta chain, fetal</fullName>
    </alternativeName>
    <alternativeName>
        <fullName>Hemoglobin gamma chain</fullName>
    </alternativeName>
</protein>
<keyword id="KW-0903">Direct protein sequencing</keyword>
<keyword id="KW-0349">Heme</keyword>
<keyword id="KW-0408">Iron</keyword>
<keyword id="KW-0479">Metal-binding</keyword>
<keyword id="KW-0561">Oxygen transport</keyword>
<keyword id="KW-1185">Reference proteome</keyword>
<keyword id="KW-0813">Transport</keyword>
<name>HBBF_BOVIN</name>
<feature type="chain" id="PRO_0000052893" description="Hemoglobin fetal subunit beta">
    <location>
        <begin position="1"/>
        <end position="145"/>
    </location>
</feature>
<feature type="domain" description="Globin" evidence="1">
    <location>
        <begin position="1"/>
        <end position="145"/>
    </location>
</feature>
<feature type="binding site" description="distal binding residue">
    <location>
        <position position="62"/>
    </location>
    <ligand>
        <name>heme b</name>
        <dbReference type="ChEBI" id="CHEBI:60344"/>
    </ligand>
    <ligandPart>
        <name>Fe</name>
        <dbReference type="ChEBI" id="CHEBI:18248"/>
    </ligandPart>
</feature>
<feature type="binding site" description="proximal binding residue">
    <location>
        <position position="91"/>
    </location>
    <ligand>
        <name>heme b</name>
        <dbReference type="ChEBI" id="CHEBI:60344"/>
    </ligand>
    <ligandPart>
        <name>Fe</name>
        <dbReference type="ChEBI" id="CHEBI:18248"/>
    </ligandPart>
</feature>